<name>PANB_BDEBA</name>
<reference key="1">
    <citation type="journal article" date="2004" name="Science">
        <title>A predator unmasked: life cycle of Bdellovibrio bacteriovorus from a genomic perspective.</title>
        <authorList>
            <person name="Rendulic S."/>
            <person name="Jagtap P."/>
            <person name="Rosinus A."/>
            <person name="Eppinger M."/>
            <person name="Baar C."/>
            <person name="Lanz C."/>
            <person name="Keller H."/>
            <person name="Lambert C."/>
            <person name="Evans K.J."/>
            <person name="Goesmann A."/>
            <person name="Meyer F."/>
            <person name="Sockett R.E."/>
            <person name="Schuster S.C."/>
        </authorList>
    </citation>
    <scope>NUCLEOTIDE SEQUENCE [LARGE SCALE GENOMIC DNA]</scope>
    <source>
        <strain>ATCC 15356 / DSM 50701 / NCIMB 9529 / HD100</strain>
    </source>
</reference>
<accession>Q6MHI3</accession>
<comment type="function">
    <text evidence="1">Catalyzes the reversible reaction in which hydroxymethyl group from 5,10-methylenetetrahydrofolate is transferred onto alpha-ketoisovalerate to form ketopantoate.</text>
</comment>
<comment type="catalytic activity">
    <reaction evidence="1">
        <text>3-methyl-2-oxobutanoate + (6R)-5,10-methylene-5,6,7,8-tetrahydrofolate + H2O = 2-dehydropantoate + (6S)-5,6,7,8-tetrahydrofolate</text>
        <dbReference type="Rhea" id="RHEA:11824"/>
        <dbReference type="ChEBI" id="CHEBI:11561"/>
        <dbReference type="ChEBI" id="CHEBI:11851"/>
        <dbReference type="ChEBI" id="CHEBI:15377"/>
        <dbReference type="ChEBI" id="CHEBI:15636"/>
        <dbReference type="ChEBI" id="CHEBI:57453"/>
        <dbReference type="EC" id="2.1.2.11"/>
    </reaction>
</comment>
<comment type="cofactor">
    <cofactor evidence="1">
        <name>Mg(2+)</name>
        <dbReference type="ChEBI" id="CHEBI:18420"/>
    </cofactor>
    <text evidence="1">Binds 1 Mg(2+) ion per subunit.</text>
</comment>
<comment type="pathway">
    <text evidence="1">Cofactor biosynthesis; (R)-pantothenate biosynthesis; (R)-pantoate from 3-methyl-2-oxobutanoate: step 1/2.</text>
</comment>
<comment type="subunit">
    <text evidence="1">Homodecamer; pentamer of dimers.</text>
</comment>
<comment type="subcellular location">
    <subcellularLocation>
        <location evidence="1">Cytoplasm</location>
    </subcellularLocation>
</comment>
<comment type="similarity">
    <text evidence="1">Belongs to the PanB family.</text>
</comment>
<proteinExistence type="inferred from homology"/>
<protein>
    <recommendedName>
        <fullName evidence="1">3-methyl-2-oxobutanoate hydroxymethyltransferase</fullName>
        <ecNumber evidence="1">2.1.2.11</ecNumber>
    </recommendedName>
    <alternativeName>
        <fullName evidence="1">Ketopantoate hydroxymethyltransferase</fullName>
        <shortName evidence="1">KPHMT</shortName>
    </alternativeName>
</protein>
<keyword id="KW-0963">Cytoplasm</keyword>
<keyword id="KW-0460">Magnesium</keyword>
<keyword id="KW-0479">Metal-binding</keyword>
<keyword id="KW-0566">Pantothenate biosynthesis</keyword>
<keyword id="KW-1185">Reference proteome</keyword>
<keyword id="KW-0808">Transferase</keyword>
<gene>
    <name evidence="1" type="primary">panB</name>
    <name type="ordered locus">Bd3560</name>
</gene>
<dbReference type="EC" id="2.1.2.11" evidence="1"/>
<dbReference type="EMBL" id="BX842655">
    <property type="protein sequence ID" value="CAE78349.1"/>
    <property type="molecule type" value="Genomic_DNA"/>
</dbReference>
<dbReference type="RefSeq" id="WP_011165887.1">
    <property type="nucleotide sequence ID" value="NC_005363.1"/>
</dbReference>
<dbReference type="SMR" id="Q6MHI3"/>
<dbReference type="STRING" id="264462.Bd3560"/>
<dbReference type="GeneID" id="93014361"/>
<dbReference type="KEGG" id="bba:Bd3560"/>
<dbReference type="eggNOG" id="COG0413">
    <property type="taxonomic scope" value="Bacteria"/>
</dbReference>
<dbReference type="HOGENOM" id="CLU_036645_1_0_7"/>
<dbReference type="UniPathway" id="UPA00028">
    <property type="reaction ID" value="UER00003"/>
</dbReference>
<dbReference type="Proteomes" id="UP000008080">
    <property type="component" value="Chromosome"/>
</dbReference>
<dbReference type="GO" id="GO:0005737">
    <property type="term" value="C:cytoplasm"/>
    <property type="evidence" value="ECO:0007669"/>
    <property type="project" value="UniProtKB-SubCell"/>
</dbReference>
<dbReference type="GO" id="GO:0003864">
    <property type="term" value="F:3-methyl-2-oxobutanoate hydroxymethyltransferase activity"/>
    <property type="evidence" value="ECO:0007669"/>
    <property type="project" value="UniProtKB-UniRule"/>
</dbReference>
<dbReference type="GO" id="GO:0000287">
    <property type="term" value="F:magnesium ion binding"/>
    <property type="evidence" value="ECO:0007669"/>
    <property type="project" value="TreeGrafter"/>
</dbReference>
<dbReference type="GO" id="GO:0015940">
    <property type="term" value="P:pantothenate biosynthetic process"/>
    <property type="evidence" value="ECO:0007669"/>
    <property type="project" value="UniProtKB-UniRule"/>
</dbReference>
<dbReference type="CDD" id="cd06557">
    <property type="entry name" value="KPHMT-like"/>
    <property type="match status" value="1"/>
</dbReference>
<dbReference type="FunFam" id="3.20.20.60:FF:000003">
    <property type="entry name" value="3-methyl-2-oxobutanoate hydroxymethyltransferase"/>
    <property type="match status" value="1"/>
</dbReference>
<dbReference type="Gene3D" id="3.20.20.60">
    <property type="entry name" value="Phosphoenolpyruvate-binding domains"/>
    <property type="match status" value="1"/>
</dbReference>
<dbReference type="HAMAP" id="MF_00156">
    <property type="entry name" value="PanB"/>
    <property type="match status" value="1"/>
</dbReference>
<dbReference type="InterPro" id="IPR003700">
    <property type="entry name" value="Pantoate_hydroxy_MeTrfase"/>
</dbReference>
<dbReference type="InterPro" id="IPR015813">
    <property type="entry name" value="Pyrv/PenolPyrv_kinase-like_dom"/>
</dbReference>
<dbReference type="InterPro" id="IPR040442">
    <property type="entry name" value="Pyrv_kinase-like_dom_sf"/>
</dbReference>
<dbReference type="NCBIfam" id="TIGR00222">
    <property type="entry name" value="panB"/>
    <property type="match status" value="1"/>
</dbReference>
<dbReference type="NCBIfam" id="NF001452">
    <property type="entry name" value="PRK00311.1"/>
    <property type="match status" value="1"/>
</dbReference>
<dbReference type="PANTHER" id="PTHR20881">
    <property type="entry name" value="3-METHYL-2-OXOBUTANOATE HYDROXYMETHYLTRANSFERASE"/>
    <property type="match status" value="1"/>
</dbReference>
<dbReference type="PANTHER" id="PTHR20881:SF0">
    <property type="entry name" value="3-METHYL-2-OXOBUTANOATE HYDROXYMETHYLTRANSFERASE"/>
    <property type="match status" value="1"/>
</dbReference>
<dbReference type="Pfam" id="PF02548">
    <property type="entry name" value="Pantoate_transf"/>
    <property type="match status" value="1"/>
</dbReference>
<dbReference type="PIRSF" id="PIRSF000388">
    <property type="entry name" value="Pantoate_hydroxy_MeTrfase"/>
    <property type="match status" value="1"/>
</dbReference>
<dbReference type="SUPFAM" id="SSF51621">
    <property type="entry name" value="Phosphoenolpyruvate/pyruvate domain"/>
    <property type="match status" value="1"/>
</dbReference>
<sequence length="263" mass="28276">MKTILDFHDKKSKKQKISMITCYDYSFARIVADSDIDCILVGDSLAMVMLGHSTTLDVSASVMAHHTAAVVRGAGDKFVIADLPFMSYRKGLTANMTAVEKVMKAGAHAVKLEGAAGNLKLVRHLVDSGVPVMGHLGLTPQSVNQLGGFKVQGRDEKAQKKILEAALQLQDAGAFSVVLECVPSKLAKEITAALEIPTIGIGAGVDCDGQVLVLQDMLGMNQGFKPKFVKTYLDGFNTIKGALNQYHQEVSTEIFPSEKESYS</sequence>
<organism>
    <name type="scientific">Bdellovibrio bacteriovorus (strain ATCC 15356 / DSM 50701 / NCIMB 9529 / HD100)</name>
    <dbReference type="NCBI Taxonomy" id="264462"/>
    <lineage>
        <taxon>Bacteria</taxon>
        <taxon>Pseudomonadati</taxon>
        <taxon>Bdellovibrionota</taxon>
        <taxon>Bdellovibrionia</taxon>
        <taxon>Bdellovibrionales</taxon>
        <taxon>Pseudobdellovibrionaceae</taxon>
        <taxon>Bdellovibrio</taxon>
    </lineage>
</organism>
<evidence type="ECO:0000255" key="1">
    <source>
        <dbReference type="HAMAP-Rule" id="MF_00156"/>
    </source>
</evidence>
<feature type="chain" id="PRO_0000184820" description="3-methyl-2-oxobutanoate hydroxymethyltransferase">
    <location>
        <begin position="1"/>
        <end position="263"/>
    </location>
</feature>
<feature type="active site" description="Proton acceptor" evidence="1">
    <location>
        <position position="180"/>
    </location>
</feature>
<feature type="binding site" evidence="1">
    <location>
        <begin position="43"/>
        <end position="44"/>
    </location>
    <ligand>
        <name>3-methyl-2-oxobutanoate</name>
        <dbReference type="ChEBI" id="CHEBI:11851"/>
    </ligand>
</feature>
<feature type="binding site" evidence="1">
    <location>
        <position position="43"/>
    </location>
    <ligand>
        <name>Mg(2+)</name>
        <dbReference type="ChEBI" id="CHEBI:18420"/>
    </ligand>
</feature>
<feature type="binding site" evidence="1">
    <location>
        <position position="82"/>
    </location>
    <ligand>
        <name>3-methyl-2-oxobutanoate</name>
        <dbReference type="ChEBI" id="CHEBI:11851"/>
    </ligand>
</feature>
<feature type="binding site" evidence="1">
    <location>
        <position position="82"/>
    </location>
    <ligand>
        <name>Mg(2+)</name>
        <dbReference type="ChEBI" id="CHEBI:18420"/>
    </ligand>
</feature>
<feature type="binding site" evidence="1">
    <location>
        <position position="111"/>
    </location>
    <ligand>
        <name>3-methyl-2-oxobutanoate</name>
        <dbReference type="ChEBI" id="CHEBI:11851"/>
    </ligand>
</feature>
<feature type="binding site" evidence="1">
    <location>
        <position position="113"/>
    </location>
    <ligand>
        <name>Mg(2+)</name>
        <dbReference type="ChEBI" id="CHEBI:18420"/>
    </ligand>
</feature>